<reference key="1">
    <citation type="journal article" date="2000" name="Nature">
        <title>Sequence and analysis of chromosome 3 of the plant Arabidopsis thaliana.</title>
        <authorList>
            <person name="Salanoubat M."/>
            <person name="Lemcke K."/>
            <person name="Rieger M."/>
            <person name="Ansorge W."/>
            <person name="Unseld M."/>
            <person name="Fartmann B."/>
            <person name="Valle G."/>
            <person name="Bloecker H."/>
            <person name="Perez-Alonso M."/>
            <person name="Obermaier B."/>
            <person name="Delseny M."/>
            <person name="Boutry M."/>
            <person name="Grivell L.A."/>
            <person name="Mache R."/>
            <person name="Puigdomenech P."/>
            <person name="De Simone V."/>
            <person name="Choisne N."/>
            <person name="Artiguenave F."/>
            <person name="Robert C."/>
            <person name="Brottier P."/>
            <person name="Wincker P."/>
            <person name="Cattolico L."/>
            <person name="Weissenbach J."/>
            <person name="Saurin W."/>
            <person name="Quetier F."/>
            <person name="Schaefer M."/>
            <person name="Mueller-Auer S."/>
            <person name="Gabel C."/>
            <person name="Fuchs M."/>
            <person name="Benes V."/>
            <person name="Wurmbach E."/>
            <person name="Drzonek H."/>
            <person name="Erfle H."/>
            <person name="Jordan N."/>
            <person name="Bangert S."/>
            <person name="Wiedelmann R."/>
            <person name="Kranz H."/>
            <person name="Voss H."/>
            <person name="Holland R."/>
            <person name="Brandt P."/>
            <person name="Nyakatura G."/>
            <person name="Vezzi A."/>
            <person name="D'Angelo M."/>
            <person name="Pallavicini A."/>
            <person name="Toppo S."/>
            <person name="Simionati B."/>
            <person name="Conrad A."/>
            <person name="Hornischer K."/>
            <person name="Kauer G."/>
            <person name="Loehnert T.-H."/>
            <person name="Nordsiek G."/>
            <person name="Reichelt J."/>
            <person name="Scharfe M."/>
            <person name="Schoen O."/>
            <person name="Bargues M."/>
            <person name="Terol J."/>
            <person name="Climent J."/>
            <person name="Navarro P."/>
            <person name="Collado C."/>
            <person name="Perez-Perez A."/>
            <person name="Ottenwaelder B."/>
            <person name="Duchemin D."/>
            <person name="Cooke R."/>
            <person name="Laudie M."/>
            <person name="Berger-Llauro C."/>
            <person name="Purnelle B."/>
            <person name="Masuy D."/>
            <person name="de Haan M."/>
            <person name="Maarse A.C."/>
            <person name="Alcaraz J.-P."/>
            <person name="Cottet A."/>
            <person name="Casacuberta E."/>
            <person name="Monfort A."/>
            <person name="Argiriou A."/>
            <person name="Flores M."/>
            <person name="Liguori R."/>
            <person name="Vitale D."/>
            <person name="Mannhaupt G."/>
            <person name="Haase D."/>
            <person name="Schoof H."/>
            <person name="Rudd S."/>
            <person name="Zaccaria P."/>
            <person name="Mewes H.-W."/>
            <person name="Mayer K.F.X."/>
            <person name="Kaul S."/>
            <person name="Town C.D."/>
            <person name="Koo H.L."/>
            <person name="Tallon L.J."/>
            <person name="Jenkins J."/>
            <person name="Rooney T."/>
            <person name="Rizzo M."/>
            <person name="Walts A."/>
            <person name="Utterback T."/>
            <person name="Fujii C.Y."/>
            <person name="Shea T.P."/>
            <person name="Creasy T.H."/>
            <person name="Haas B."/>
            <person name="Maiti R."/>
            <person name="Wu D."/>
            <person name="Peterson J."/>
            <person name="Van Aken S."/>
            <person name="Pai G."/>
            <person name="Militscher J."/>
            <person name="Sellers P."/>
            <person name="Gill J.E."/>
            <person name="Feldblyum T.V."/>
            <person name="Preuss D."/>
            <person name="Lin X."/>
            <person name="Nierman W.C."/>
            <person name="Salzberg S.L."/>
            <person name="White O."/>
            <person name="Venter J.C."/>
            <person name="Fraser C.M."/>
            <person name="Kaneko T."/>
            <person name="Nakamura Y."/>
            <person name="Sato S."/>
            <person name="Kato T."/>
            <person name="Asamizu E."/>
            <person name="Sasamoto S."/>
            <person name="Kimura T."/>
            <person name="Idesawa K."/>
            <person name="Kawashima K."/>
            <person name="Kishida Y."/>
            <person name="Kiyokawa C."/>
            <person name="Kohara M."/>
            <person name="Matsumoto M."/>
            <person name="Matsuno A."/>
            <person name="Muraki A."/>
            <person name="Nakayama S."/>
            <person name="Nakazaki N."/>
            <person name="Shinpo S."/>
            <person name="Takeuchi C."/>
            <person name="Wada T."/>
            <person name="Watanabe A."/>
            <person name="Yamada M."/>
            <person name="Yasuda M."/>
            <person name="Tabata S."/>
        </authorList>
    </citation>
    <scope>NUCLEOTIDE SEQUENCE [LARGE SCALE GENOMIC DNA]</scope>
    <source>
        <strain>cv. Columbia</strain>
    </source>
</reference>
<reference key="2">
    <citation type="journal article" date="2017" name="Plant J.">
        <title>Araport11: a complete reannotation of the Arabidopsis thaliana reference genome.</title>
        <authorList>
            <person name="Cheng C.Y."/>
            <person name="Krishnakumar V."/>
            <person name="Chan A.P."/>
            <person name="Thibaud-Nissen F."/>
            <person name="Schobel S."/>
            <person name="Town C.D."/>
        </authorList>
    </citation>
    <scope>GENOME REANNOTATION</scope>
    <source>
        <strain>cv. Columbia</strain>
    </source>
</reference>
<reference key="3">
    <citation type="journal article" date="2009" name="BMC Plant Biol.">
        <title>The extracellular EXO protein mediates cell expansion in Arabidopsis leaves.</title>
        <authorList>
            <person name="Schroder F."/>
            <person name="Lisso J."/>
            <person name="Lange P."/>
            <person name="Mussig C."/>
        </authorList>
    </citation>
    <scope>GENE FAMILY</scope>
    <scope>NOMENCLATURE</scope>
</reference>
<gene>
    <name type="primary">EXL6</name>
    <name type="ordered locus">At3g02970</name>
    <name type="ORF">F13E7.8</name>
</gene>
<proteinExistence type="inferred from homology"/>
<keyword id="KW-0052">Apoplast</keyword>
<keyword id="KW-0325">Glycoprotein</keyword>
<keyword id="KW-1185">Reference proteome</keyword>
<keyword id="KW-0964">Secreted</keyword>
<keyword id="KW-0732">Signal</keyword>
<organism>
    <name type="scientific">Arabidopsis thaliana</name>
    <name type="common">Mouse-ear cress</name>
    <dbReference type="NCBI Taxonomy" id="3702"/>
    <lineage>
        <taxon>Eukaryota</taxon>
        <taxon>Viridiplantae</taxon>
        <taxon>Streptophyta</taxon>
        <taxon>Embryophyta</taxon>
        <taxon>Tracheophyta</taxon>
        <taxon>Spermatophyta</taxon>
        <taxon>Magnoliopsida</taxon>
        <taxon>eudicotyledons</taxon>
        <taxon>Gunneridae</taxon>
        <taxon>Pentapetalae</taxon>
        <taxon>rosids</taxon>
        <taxon>malvids</taxon>
        <taxon>Brassicales</taxon>
        <taxon>Brassicaceae</taxon>
        <taxon>Camelineae</taxon>
        <taxon>Arabidopsis</taxon>
    </lineage>
</organism>
<protein>
    <recommendedName>
        <fullName>Protein EXORDIUM-like 6</fullName>
    </recommendedName>
</protein>
<dbReference type="EMBL" id="AC018363">
    <property type="protein sequence ID" value="AAF26962.1"/>
    <property type="molecule type" value="Genomic_DNA"/>
</dbReference>
<dbReference type="EMBL" id="CP002686">
    <property type="protein sequence ID" value="AEE73886.1"/>
    <property type="molecule type" value="Genomic_DNA"/>
</dbReference>
<dbReference type="RefSeq" id="NP_186947.1">
    <property type="nucleotide sequence ID" value="NM_111167.4"/>
</dbReference>
<dbReference type="FunCoup" id="Q9M8T8">
    <property type="interactions" value="10"/>
</dbReference>
<dbReference type="STRING" id="3702.Q9M8T8"/>
<dbReference type="GlyCosmos" id="Q9M8T8">
    <property type="glycosylation" value="3 sites, No reported glycans"/>
</dbReference>
<dbReference type="GlyGen" id="Q9M8T8">
    <property type="glycosylation" value="3 sites"/>
</dbReference>
<dbReference type="PaxDb" id="3702-AT3G02970.1"/>
<dbReference type="ProteomicsDB" id="222333"/>
<dbReference type="EnsemblPlants" id="AT3G02970.1">
    <property type="protein sequence ID" value="AT3G02970.1"/>
    <property type="gene ID" value="AT3G02970"/>
</dbReference>
<dbReference type="GeneID" id="821168"/>
<dbReference type="Gramene" id="AT3G02970.1">
    <property type="protein sequence ID" value="AT3G02970.1"/>
    <property type="gene ID" value="AT3G02970"/>
</dbReference>
<dbReference type="KEGG" id="ath:AT3G02970"/>
<dbReference type="Araport" id="AT3G02970"/>
<dbReference type="TAIR" id="AT3G02970">
    <property type="gene designation" value="EXL6"/>
</dbReference>
<dbReference type="eggNOG" id="ENOG502RKHQ">
    <property type="taxonomic scope" value="Eukaryota"/>
</dbReference>
<dbReference type="HOGENOM" id="CLU_053777_1_0_1"/>
<dbReference type="InParanoid" id="Q9M8T8"/>
<dbReference type="OMA" id="LCMGKCS"/>
<dbReference type="PhylomeDB" id="Q9M8T8"/>
<dbReference type="PRO" id="PR:Q9M8T8"/>
<dbReference type="Proteomes" id="UP000006548">
    <property type="component" value="Chromosome 3"/>
</dbReference>
<dbReference type="ExpressionAtlas" id="Q9M8T8">
    <property type="expression patterns" value="baseline and differential"/>
</dbReference>
<dbReference type="GO" id="GO:0048046">
    <property type="term" value="C:apoplast"/>
    <property type="evidence" value="ECO:0007669"/>
    <property type="project" value="UniProtKB-SubCell"/>
</dbReference>
<dbReference type="InterPro" id="IPR006766">
    <property type="entry name" value="EXORDIUM-like"/>
</dbReference>
<dbReference type="PANTHER" id="PTHR31279">
    <property type="entry name" value="PROTEIN EXORDIUM-LIKE 5"/>
    <property type="match status" value="1"/>
</dbReference>
<dbReference type="PANTHER" id="PTHR31279:SF13">
    <property type="entry name" value="PROTEIN EXORDIUM-LIKE 6"/>
    <property type="match status" value="1"/>
</dbReference>
<dbReference type="Pfam" id="PF04674">
    <property type="entry name" value="Phi_1"/>
    <property type="match status" value="1"/>
</dbReference>
<evidence type="ECO:0000250" key="1"/>
<evidence type="ECO:0000255" key="2"/>
<evidence type="ECO:0000305" key="3"/>
<accession>Q9M8T8</accession>
<feature type="signal peptide" evidence="2">
    <location>
        <begin position="1"/>
        <end position="27"/>
    </location>
</feature>
<feature type="chain" id="PRO_0000430286" description="Protein EXORDIUM-like 6">
    <location>
        <begin position="28"/>
        <end position="332"/>
    </location>
</feature>
<feature type="glycosylation site" description="N-linked (GlcNAc...) asparagine" evidence="2">
    <location>
        <position position="36"/>
    </location>
</feature>
<feature type="glycosylation site" description="N-linked (GlcNAc...) asparagine" evidence="2">
    <location>
        <position position="102"/>
    </location>
</feature>
<feature type="glycosylation site" description="N-linked (GlcNAc...) asparagine" evidence="2">
    <location>
        <position position="143"/>
    </location>
</feature>
<comment type="function">
    <text evidence="1">May play a role in a brassinosteroid-dependent regulation of growth and development.</text>
</comment>
<comment type="subcellular location">
    <subcellularLocation>
        <location>Secreted</location>
    </subcellularLocation>
    <subcellularLocation>
        <location>Secreted</location>
        <location>Extracellular space</location>
    </subcellularLocation>
    <subcellularLocation>
        <location evidence="3">Secreted</location>
        <location evidence="3">Extracellular space</location>
        <location evidence="3">Apoplast</location>
    </subcellularLocation>
</comment>
<comment type="similarity">
    <text evidence="3">Belongs to the EXORDIUM family.</text>
</comment>
<name>EXOL6_ARATH</name>
<sequence>MAMASASSSSSSISVIIFLLLAPLCLSREPPSQIPNGTLDLSLLWYGQFTPTQKERVHDFIESLNFDAKEGLDPKVSAWWKVVESYQERFEVKDIYRQKKSNRTVAPRIKVKVVRSYVDEKMKYGKELTMGNGEKLVETAIGNMSKVVPVVLLSAQVRAHGVGFCDGTCQHNALAKIKGQKEPRRYIMVSNPEVECPGECAWPFHTADKGPRGMTYQPASGEVGADALVIQLATGLADLATNPDLTKSLFKSETTPYNDDVKKNHESSSMYIVDPATKCTRVFGSGAFPGFTGRIRVDPITGGAFNSHGINHLKFLIPSIWDPKTKSCWTPM</sequence>